<feature type="chain" id="PRO_1000075990" description="Heptaprenylglyceryl phosphate synthase">
    <location>
        <begin position="1"/>
        <end position="230"/>
    </location>
</feature>
<feature type="binding site" evidence="1">
    <location>
        <position position="12"/>
    </location>
    <ligand>
        <name>sn-glycerol 1-phosphate</name>
        <dbReference type="ChEBI" id="CHEBI:57685"/>
    </ligand>
</feature>
<feature type="binding site" evidence="1">
    <location>
        <position position="14"/>
    </location>
    <ligand>
        <name>Mg(2+)</name>
        <dbReference type="ChEBI" id="CHEBI:18420"/>
    </ligand>
</feature>
<feature type="binding site" evidence="1">
    <location>
        <position position="40"/>
    </location>
    <ligand>
        <name>Mg(2+)</name>
        <dbReference type="ChEBI" id="CHEBI:18420"/>
    </ligand>
</feature>
<feature type="binding site" evidence="1">
    <location>
        <begin position="159"/>
        <end position="164"/>
    </location>
    <ligand>
        <name>sn-glycerol 1-phosphate</name>
        <dbReference type="ChEBI" id="CHEBI:57685"/>
    </ligand>
</feature>
<feature type="binding site" evidence="1">
    <location>
        <position position="189"/>
    </location>
    <ligand>
        <name>sn-glycerol 1-phosphate</name>
        <dbReference type="ChEBI" id="CHEBI:57685"/>
    </ligand>
</feature>
<feature type="binding site" evidence="1">
    <location>
        <begin position="209"/>
        <end position="210"/>
    </location>
    <ligand>
        <name>sn-glycerol 1-phosphate</name>
        <dbReference type="ChEBI" id="CHEBI:57685"/>
    </ligand>
</feature>
<sequence length="230" mass="25921">MYDIKKWRHIFKLDPAKHISDDDLDAICMSQTDAIMIGGTDDVTEDNVIHLMSRVRRYPLPLVLEISNIESVMPGFDFYFVPTVLNSTDVVFHNGTLLEALKTYGHSIDFEEVIFEGYVVCNADSKMAKHTKANTDLTTEDLEAYAQMVNHMYRLPVMYIEYSGIYGDVSKVQAVSEHLTETQLFYGGGISSEQQATEMAAIADTIIVGDIIYKDIKKALKTVKIKESSK</sequence>
<evidence type="ECO:0000255" key="1">
    <source>
        <dbReference type="HAMAP-Rule" id="MF_00112"/>
    </source>
</evidence>
<gene>
    <name evidence="1" type="primary">pcrB</name>
    <name type="ordered locus">USA300HOU_1907</name>
</gene>
<organism>
    <name type="scientific">Staphylococcus aureus (strain USA300 / TCH1516)</name>
    <dbReference type="NCBI Taxonomy" id="451516"/>
    <lineage>
        <taxon>Bacteria</taxon>
        <taxon>Bacillati</taxon>
        <taxon>Bacillota</taxon>
        <taxon>Bacilli</taxon>
        <taxon>Bacillales</taxon>
        <taxon>Staphylococcaceae</taxon>
        <taxon>Staphylococcus</taxon>
    </lineage>
</organism>
<name>PCRB_STAAT</name>
<reference key="1">
    <citation type="journal article" date="2007" name="BMC Microbiol.">
        <title>Subtle genetic changes enhance virulence of methicillin resistant and sensitive Staphylococcus aureus.</title>
        <authorList>
            <person name="Highlander S.K."/>
            <person name="Hulten K.G."/>
            <person name="Qin X."/>
            <person name="Jiang H."/>
            <person name="Yerrapragada S."/>
            <person name="Mason E.O. Jr."/>
            <person name="Shang Y."/>
            <person name="Williams T.M."/>
            <person name="Fortunov R.M."/>
            <person name="Liu Y."/>
            <person name="Igboeli O."/>
            <person name="Petrosino J."/>
            <person name="Tirumalai M."/>
            <person name="Uzman A."/>
            <person name="Fox G.E."/>
            <person name="Cardenas A.M."/>
            <person name="Muzny D.M."/>
            <person name="Hemphill L."/>
            <person name="Ding Y."/>
            <person name="Dugan S."/>
            <person name="Blyth P.R."/>
            <person name="Buhay C.J."/>
            <person name="Dinh H.H."/>
            <person name="Hawes A.C."/>
            <person name="Holder M."/>
            <person name="Kovar C.L."/>
            <person name="Lee S.L."/>
            <person name="Liu W."/>
            <person name="Nazareth L.V."/>
            <person name="Wang Q."/>
            <person name="Zhou J."/>
            <person name="Kaplan S.L."/>
            <person name="Weinstock G.M."/>
        </authorList>
    </citation>
    <scope>NUCLEOTIDE SEQUENCE [LARGE SCALE GENOMIC DNA]</scope>
    <source>
        <strain>USA300 / TCH1516</strain>
    </source>
</reference>
<dbReference type="EC" id="2.5.1.n9" evidence="1"/>
<dbReference type="EMBL" id="CP000730">
    <property type="protein sequence ID" value="ABX29909.1"/>
    <property type="molecule type" value="Genomic_DNA"/>
</dbReference>
<dbReference type="RefSeq" id="WP_000272069.1">
    <property type="nucleotide sequence ID" value="NC_010079.1"/>
</dbReference>
<dbReference type="SMR" id="A8Z2S0"/>
<dbReference type="KEGG" id="sax:USA300HOU_1907"/>
<dbReference type="HOGENOM" id="CLU_095211_0_0_9"/>
<dbReference type="UniPathway" id="UPA00940"/>
<dbReference type="GO" id="GO:0120536">
    <property type="term" value="F:heptaprenylglyceryl phosphate synthase activity"/>
    <property type="evidence" value="ECO:0007669"/>
    <property type="project" value="RHEA"/>
</dbReference>
<dbReference type="GO" id="GO:0000287">
    <property type="term" value="F:magnesium ion binding"/>
    <property type="evidence" value="ECO:0007669"/>
    <property type="project" value="UniProtKB-UniRule"/>
</dbReference>
<dbReference type="GO" id="GO:0046474">
    <property type="term" value="P:glycerophospholipid biosynthetic process"/>
    <property type="evidence" value="ECO:0007669"/>
    <property type="project" value="UniProtKB-UniRule"/>
</dbReference>
<dbReference type="CDD" id="cd02812">
    <property type="entry name" value="PcrB_like"/>
    <property type="match status" value="1"/>
</dbReference>
<dbReference type="FunFam" id="3.20.20.390:FF:000001">
    <property type="entry name" value="Heptaprenylglyceryl phosphate synthase"/>
    <property type="match status" value="1"/>
</dbReference>
<dbReference type="Gene3D" id="3.20.20.390">
    <property type="entry name" value="FMN-linked oxidoreductases"/>
    <property type="match status" value="1"/>
</dbReference>
<dbReference type="HAMAP" id="MF_00112">
    <property type="entry name" value="GGGP_HepGP_synthase"/>
    <property type="match status" value="1"/>
</dbReference>
<dbReference type="InterPro" id="IPR039074">
    <property type="entry name" value="GGGP/HepGP_synthase_I"/>
</dbReference>
<dbReference type="InterPro" id="IPR038597">
    <property type="entry name" value="GGGP/HepGP_synthase_sf"/>
</dbReference>
<dbReference type="InterPro" id="IPR008205">
    <property type="entry name" value="GGGP_HepGP_synthase"/>
</dbReference>
<dbReference type="NCBIfam" id="TIGR01768">
    <property type="entry name" value="GGGP-family"/>
    <property type="match status" value="1"/>
</dbReference>
<dbReference type="NCBIfam" id="NF003197">
    <property type="entry name" value="PRK04169.1-1"/>
    <property type="match status" value="1"/>
</dbReference>
<dbReference type="NCBIfam" id="NF003199">
    <property type="entry name" value="PRK04169.1-3"/>
    <property type="match status" value="1"/>
</dbReference>
<dbReference type="NCBIfam" id="NF003200">
    <property type="entry name" value="PRK04169.1-4"/>
    <property type="match status" value="1"/>
</dbReference>
<dbReference type="PANTHER" id="PTHR40029">
    <property type="match status" value="1"/>
</dbReference>
<dbReference type="PANTHER" id="PTHR40029:SF2">
    <property type="entry name" value="HEPTAPRENYLGLYCERYL PHOSPHATE SYNTHASE"/>
    <property type="match status" value="1"/>
</dbReference>
<dbReference type="Pfam" id="PF01884">
    <property type="entry name" value="PcrB"/>
    <property type="match status" value="1"/>
</dbReference>
<dbReference type="SUPFAM" id="SSF51395">
    <property type="entry name" value="FMN-linked oxidoreductases"/>
    <property type="match status" value="1"/>
</dbReference>
<keyword id="KW-0444">Lipid biosynthesis</keyword>
<keyword id="KW-0443">Lipid metabolism</keyword>
<keyword id="KW-0460">Magnesium</keyword>
<keyword id="KW-0479">Metal-binding</keyword>
<keyword id="KW-0594">Phospholipid biosynthesis</keyword>
<keyword id="KW-1208">Phospholipid metabolism</keyword>
<keyword id="KW-0808">Transferase</keyword>
<protein>
    <recommendedName>
        <fullName evidence="1">Heptaprenylglyceryl phosphate synthase</fullName>
        <shortName evidence="1">HepGP synthase</shortName>
        <ecNumber evidence="1">2.5.1.n9</ecNumber>
    </recommendedName>
    <alternativeName>
        <fullName evidence="1">Glycerol-1-phosphate heptaprenyltransferase</fullName>
    </alternativeName>
</protein>
<proteinExistence type="inferred from homology"/>
<accession>A8Z2S0</accession>
<comment type="function">
    <text evidence="1">Prenyltransferase that catalyzes in vivo the transfer of the heptaprenyl moiety of heptaprenyl pyrophosphate (HepPP; 35 carbon atoms) to the C3 hydroxyl of sn-glycerol-1-phosphate (G1P), producing heptaprenylglyceryl phosphate (HepGP). This reaction is an ether-bond-formation step in the biosynthesis of archaea-type G1P-based membrane lipids found in Bacillales.</text>
</comment>
<comment type="catalytic activity">
    <reaction evidence="1">
        <text>sn-glycerol 1-phosphate + all-trans-heptaprenyl diphosphate = 3-heptaprenyl-sn-glycero-1-phosphate + diphosphate</text>
        <dbReference type="Rhea" id="RHEA:33495"/>
        <dbReference type="ChEBI" id="CHEBI:33019"/>
        <dbReference type="ChEBI" id="CHEBI:57685"/>
        <dbReference type="ChEBI" id="CHEBI:58206"/>
        <dbReference type="ChEBI" id="CHEBI:64781"/>
        <dbReference type="EC" id="2.5.1.n9"/>
    </reaction>
</comment>
<comment type="cofactor">
    <cofactor evidence="1">
        <name>Mg(2+)</name>
        <dbReference type="ChEBI" id="CHEBI:18420"/>
    </cofactor>
</comment>
<comment type="pathway">
    <text evidence="1">Membrane lipid metabolism; glycerophospholipid metabolism.</text>
</comment>
<comment type="subunit">
    <text evidence="1">Homodimer.</text>
</comment>
<comment type="similarity">
    <text evidence="1">Belongs to the GGGP/HepGP synthase family. Group I subfamily.</text>
</comment>